<feature type="chain" id="PRO_0000199801" description="Biotin-dependent acetyl-/propionyl-coenzyme A carboxylase beta6 subunit">
    <location>
        <begin position="1"/>
        <end position="473"/>
    </location>
</feature>
<feature type="domain" description="CoA carboxyltransferase N-terminal" evidence="2">
    <location>
        <begin position="1"/>
        <end position="224"/>
    </location>
</feature>
<feature type="domain" description="CoA carboxyltransferase C-terminal" evidence="3">
    <location>
        <begin position="225"/>
        <end position="473"/>
    </location>
</feature>
<organism>
    <name type="scientific">Mycobacterium bovis (strain ATCC BAA-935 / AF2122/97)</name>
    <dbReference type="NCBI Taxonomy" id="233413"/>
    <lineage>
        <taxon>Bacteria</taxon>
        <taxon>Bacillati</taxon>
        <taxon>Actinomycetota</taxon>
        <taxon>Actinomycetes</taxon>
        <taxon>Mycobacteriales</taxon>
        <taxon>Mycobacteriaceae</taxon>
        <taxon>Mycobacterium</taxon>
        <taxon>Mycobacterium tuberculosis complex</taxon>
    </lineage>
</organism>
<dbReference type="EC" id="2.1.3.15" evidence="1"/>
<dbReference type="EC" id="2.1.3.-" evidence="1"/>
<dbReference type="EMBL" id="LT708304">
    <property type="protein sequence ID" value="SIU00882.1"/>
    <property type="molecule type" value="Genomic_DNA"/>
</dbReference>
<dbReference type="RefSeq" id="NP_855920.1">
    <property type="nucleotide sequence ID" value="NC_002945.3"/>
</dbReference>
<dbReference type="RefSeq" id="WP_003900487.1">
    <property type="nucleotide sequence ID" value="NC_002945.4"/>
</dbReference>
<dbReference type="SMR" id="P63408"/>
<dbReference type="KEGG" id="mbo:BQ2027_MB2271"/>
<dbReference type="PATRIC" id="fig|233413.5.peg.2492"/>
<dbReference type="UniPathway" id="UPA00094"/>
<dbReference type="UniPathway" id="UPA00915"/>
<dbReference type="Proteomes" id="UP000001419">
    <property type="component" value="Chromosome"/>
</dbReference>
<dbReference type="GO" id="GO:0009317">
    <property type="term" value="C:acetyl-CoA carboxylase complex"/>
    <property type="evidence" value="ECO:0007669"/>
    <property type="project" value="TreeGrafter"/>
</dbReference>
<dbReference type="GO" id="GO:0004658">
    <property type="term" value="F:propionyl-CoA carboxylase activity"/>
    <property type="evidence" value="ECO:0007669"/>
    <property type="project" value="TreeGrafter"/>
</dbReference>
<dbReference type="GO" id="GO:0016740">
    <property type="term" value="F:transferase activity"/>
    <property type="evidence" value="ECO:0007669"/>
    <property type="project" value="UniProtKB-KW"/>
</dbReference>
<dbReference type="GO" id="GO:0006633">
    <property type="term" value="P:fatty acid biosynthetic process"/>
    <property type="evidence" value="ECO:0007669"/>
    <property type="project" value="UniProtKB-UniPathway"/>
</dbReference>
<dbReference type="FunFam" id="3.90.226.10:FF:000039">
    <property type="entry name" value="Propionyl-CoA carboxylase subunit beta 6"/>
    <property type="match status" value="1"/>
</dbReference>
<dbReference type="FunFam" id="3.90.226.10:FF:000060">
    <property type="entry name" value="Propionyl-CoA carboxylase subunit beta 6"/>
    <property type="match status" value="1"/>
</dbReference>
<dbReference type="Gene3D" id="3.90.226.10">
    <property type="entry name" value="2-enoyl-CoA Hydratase, Chain A, domain 1"/>
    <property type="match status" value="2"/>
</dbReference>
<dbReference type="InterPro" id="IPR051047">
    <property type="entry name" value="AccD/PCCB"/>
</dbReference>
<dbReference type="InterPro" id="IPR034733">
    <property type="entry name" value="AcCoA_carboxyl_beta"/>
</dbReference>
<dbReference type="InterPro" id="IPR029045">
    <property type="entry name" value="ClpP/crotonase-like_dom_sf"/>
</dbReference>
<dbReference type="InterPro" id="IPR011763">
    <property type="entry name" value="COA_CT_C"/>
</dbReference>
<dbReference type="InterPro" id="IPR011762">
    <property type="entry name" value="COA_CT_N"/>
</dbReference>
<dbReference type="PANTHER" id="PTHR43842">
    <property type="entry name" value="PROPIONYL-COA CARBOXYLASE BETA CHAIN"/>
    <property type="match status" value="1"/>
</dbReference>
<dbReference type="PANTHER" id="PTHR43842:SF2">
    <property type="entry name" value="PROPIONYL-COA CARBOXYLASE BETA CHAIN, MITOCHONDRIAL"/>
    <property type="match status" value="1"/>
</dbReference>
<dbReference type="Pfam" id="PF01039">
    <property type="entry name" value="Carboxyl_trans"/>
    <property type="match status" value="1"/>
</dbReference>
<dbReference type="SUPFAM" id="SSF52096">
    <property type="entry name" value="ClpP/crotonase"/>
    <property type="match status" value="2"/>
</dbReference>
<dbReference type="PROSITE" id="PS50989">
    <property type="entry name" value="COA_CT_CTER"/>
    <property type="match status" value="1"/>
</dbReference>
<dbReference type="PROSITE" id="PS50980">
    <property type="entry name" value="COA_CT_NTER"/>
    <property type="match status" value="1"/>
</dbReference>
<accession>P63408</accession>
<accession>A0A1R3Y0N7</accession>
<accession>Q10506</accession>
<accession>X2BKK0</accession>
<reference key="1">
    <citation type="journal article" date="2003" name="Proc. Natl. Acad. Sci. U.S.A.">
        <title>The complete genome sequence of Mycobacterium bovis.</title>
        <authorList>
            <person name="Garnier T."/>
            <person name="Eiglmeier K."/>
            <person name="Camus J.-C."/>
            <person name="Medina N."/>
            <person name="Mansoor H."/>
            <person name="Pryor M."/>
            <person name="Duthoy S."/>
            <person name="Grondin S."/>
            <person name="Lacroix C."/>
            <person name="Monsempe C."/>
            <person name="Simon S."/>
            <person name="Harris B."/>
            <person name="Atkin R."/>
            <person name="Doggett J."/>
            <person name="Mayes R."/>
            <person name="Keating L."/>
            <person name="Wheeler P.R."/>
            <person name="Parkhill J."/>
            <person name="Barrell B.G."/>
            <person name="Cole S.T."/>
            <person name="Gordon S.V."/>
            <person name="Hewinson R.G."/>
        </authorList>
    </citation>
    <scope>NUCLEOTIDE SEQUENCE [LARGE SCALE GENOMIC DNA]</scope>
    <source>
        <strain>ATCC BAA-935 / AF2122/97</strain>
    </source>
</reference>
<reference key="2">
    <citation type="journal article" date="2017" name="Genome Announc.">
        <title>Updated reference genome sequence and annotation of Mycobacterium bovis AF2122/97.</title>
        <authorList>
            <person name="Malone K.M."/>
            <person name="Farrell D."/>
            <person name="Stuber T.P."/>
            <person name="Schubert O.T."/>
            <person name="Aebersold R."/>
            <person name="Robbe-Austerman S."/>
            <person name="Gordon S.V."/>
        </authorList>
    </citation>
    <scope>NUCLEOTIDE SEQUENCE [LARGE SCALE GENOMIC DNA]</scope>
    <scope>GENOME REANNOTATION</scope>
    <source>
        <strain>ATCC BAA-935 / AF2122/97</strain>
    </source>
</reference>
<keyword id="KW-0275">Fatty acid biosynthesis</keyword>
<keyword id="KW-0276">Fatty acid metabolism</keyword>
<keyword id="KW-0444">Lipid biosynthesis</keyword>
<keyword id="KW-0443">Lipid metabolism</keyword>
<keyword id="KW-1185">Reference proteome</keyword>
<keyword id="KW-0808">Transferase</keyword>
<comment type="function">
    <text evidence="1">Component of a biotin-dependent acyl-CoA carboxylase complex. This subunit transfers the CO2 from carboxybiotin to the CoA ester substrate. When associated with the alpha3 subunit AccA3, is involved in the carboxylation of acetyl-CoA and propionyl-CoA.</text>
</comment>
<comment type="catalytic activity">
    <reaction evidence="1">
        <text>N(6)-carboxybiotinyl-L-lysyl-[protein] + acetyl-CoA = N(6)-biotinyl-L-lysyl-[protein] + malonyl-CoA</text>
        <dbReference type="Rhea" id="RHEA:54728"/>
        <dbReference type="Rhea" id="RHEA-COMP:10505"/>
        <dbReference type="Rhea" id="RHEA-COMP:10506"/>
        <dbReference type="ChEBI" id="CHEBI:57288"/>
        <dbReference type="ChEBI" id="CHEBI:57384"/>
        <dbReference type="ChEBI" id="CHEBI:83144"/>
        <dbReference type="ChEBI" id="CHEBI:83145"/>
        <dbReference type="EC" id="2.1.3.15"/>
    </reaction>
    <physiologicalReaction direction="left-to-right" evidence="1">
        <dbReference type="Rhea" id="RHEA:54729"/>
    </physiologicalReaction>
</comment>
<comment type="catalytic activity">
    <reaction evidence="1">
        <text>N(6)-carboxybiotinyl-L-lysyl-[protein] + propanoyl-CoA = methylmalonyl-CoA + N(6)-biotinyl-L-lysyl-[protein]</text>
        <dbReference type="Rhea" id="RHEA:66612"/>
        <dbReference type="Rhea" id="RHEA-COMP:10505"/>
        <dbReference type="Rhea" id="RHEA-COMP:10506"/>
        <dbReference type="ChEBI" id="CHEBI:57392"/>
        <dbReference type="ChEBI" id="CHEBI:59916"/>
        <dbReference type="ChEBI" id="CHEBI:83144"/>
        <dbReference type="ChEBI" id="CHEBI:83145"/>
    </reaction>
    <physiologicalReaction direction="left-to-right" evidence="1">
        <dbReference type="Rhea" id="RHEA:66613"/>
    </physiologicalReaction>
</comment>
<comment type="pathway">
    <text evidence="1">Lipid metabolism; fatty acid biosynthesis.</text>
</comment>
<comment type="pathway">
    <text evidence="1">Lipid metabolism; mycolic acid biosynthesis.</text>
</comment>
<comment type="subunit">
    <text evidence="1">The biotin-dependent acyl-CoA carboxylase complex is composed of AccA3, which contains the biotin carboxylase (BC) and biotin carboxyl carrier protein (BCCP) domains, and AccD6, which contains the carboxyl transferase (CT) domain.</text>
</comment>
<comment type="similarity">
    <text evidence="4">Belongs to the AccD/PCCB family.</text>
</comment>
<proteinExistence type="inferred from homology"/>
<evidence type="ECO:0000250" key="1">
    <source>
        <dbReference type="UniProtKB" id="P9WQH5"/>
    </source>
</evidence>
<evidence type="ECO:0000255" key="2">
    <source>
        <dbReference type="PROSITE-ProRule" id="PRU01136"/>
    </source>
</evidence>
<evidence type="ECO:0000255" key="3">
    <source>
        <dbReference type="PROSITE-ProRule" id="PRU01137"/>
    </source>
</evidence>
<evidence type="ECO:0000305" key="4"/>
<sequence length="473" mass="50136">MTIMAPEAVGESLDPRDPLLRLSNFFDDGSVELLHERDRSGVLAAAGTVNGVRTIAFCTDGTVMGGAMGVEGCTHIVNAYDTAIEDQSPIVGIWHSGGARLAEGVRALHAVGQVFEAMIRASGYIPQISVVVGFAAGGAAYGPALTDVVVMAPESRVFVTGPDVVRSVTGEDVDMASLGGPETHHKKSGVCHIVADDELDAYDRGRRLVGLFCQQGHFDRSKAEAGDTDIHALLPESSRRAYDVRPIVTAILDADTPFDEFQANWAPSMVVGLGRLSGRTVGVLANNPLRLGGCLNSESAEKAARFVRLCDAFGIPLVVVVDVPGYLPGVDQEWGGVVRRGAKLLHAFGECTVPRVTLVTRKTYGGAYIAMNSRSLNATKVFAWPDAEVAVMGAKAAVGILHKKKLAAAPEHEREALHDQLAAEHERIAGGVDSALDIGVVDEKIDPAHTRSKLTEALAQAPARRGRHKNIPL</sequence>
<name>ACCD6_MYCBO</name>
<gene>
    <name type="primary">accD6</name>
    <name type="ordered locus">BQ2027_MB2271</name>
</gene>
<protein>
    <recommendedName>
        <fullName evidence="1">Biotin-dependent acetyl-/propionyl-coenzyme A carboxylase beta6 subunit</fullName>
    </recommendedName>
    <alternativeName>
        <fullName evidence="1">Acetyl-CoA carboxylase</fullName>
        <shortName evidence="1">ACC</shortName>
        <ecNumber evidence="1">2.1.3.15</ecNumber>
    </alternativeName>
    <alternativeName>
        <fullName evidence="1">Propionyl-CoA carboxylase</fullName>
        <shortName evidence="1">PCC</shortName>
        <ecNumber evidence="1">2.1.3.-</ecNumber>
    </alternativeName>
</protein>